<sequence>MQDPRHPQGLPLSPGLPKRQRQDRTIYNWKQQEVLENHFKEEQYPDYDTRQELAEMLNLREYQVQVWFKNRRAKRSRERWFQKQLQQLQKHPQQQHPQQQHPQQQLQQQQPQQQPQQQQPQQQPQQQQPQQQQLHQQPQ</sequence>
<name>TPRXL_HUMAN</name>
<keyword id="KW-0217">Developmental protein</keyword>
<keyword id="KW-0238">DNA-binding</keyword>
<keyword id="KW-0371">Homeobox</keyword>
<keyword id="KW-0539">Nucleus</keyword>
<keyword id="KW-1185">Reference proteome</keyword>
<keyword id="KW-0804">Transcription</keyword>
<keyword id="KW-0805">Transcription regulation</keyword>
<accession>Q17RH7</accession>
<accession>Q8NAM5</accession>
<feature type="chain" id="PRO_0000314489" description="Tetra-peptide repeat homeobox-like protein">
    <location>
        <begin position="1"/>
        <end position="139"/>
    </location>
</feature>
<feature type="DNA-binding region" description="Homeobox" evidence="2">
    <location>
        <begin position="20"/>
        <end position="79"/>
    </location>
</feature>
<feature type="region of interest" description="Disordered" evidence="3">
    <location>
        <begin position="1"/>
        <end position="22"/>
    </location>
</feature>
<feature type="region of interest" description="Disordered" evidence="3">
    <location>
        <begin position="78"/>
        <end position="139"/>
    </location>
</feature>
<feature type="compositionally biased region" description="Low complexity" evidence="3">
    <location>
        <begin position="82"/>
        <end position="139"/>
    </location>
</feature>
<protein>
    <recommendedName>
        <fullName evidence="6">Tetra-peptide repeat homeobox-like protein</fullName>
    </recommendedName>
</protein>
<proteinExistence type="evidence at protein level"/>
<organism>
    <name type="scientific">Homo sapiens</name>
    <name type="common">Human</name>
    <dbReference type="NCBI Taxonomy" id="9606"/>
    <lineage>
        <taxon>Eukaryota</taxon>
        <taxon>Metazoa</taxon>
        <taxon>Chordata</taxon>
        <taxon>Craniata</taxon>
        <taxon>Vertebrata</taxon>
        <taxon>Euteleostomi</taxon>
        <taxon>Mammalia</taxon>
        <taxon>Eutheria</taxon>
        <taxon>Euarchontoglires</taxon>
        <taxon>Primates</taxon>
        <taxon>Haplorrhini</taxon>
        <taxon>Catarrhini</taxon>
        <taxon>Hominidae</taxon>
        <taxon>Homo</taxon>
    </lineage>
</organism>
<dbReference type="EMBL" id="AK092426">
    <property type="protein sequence ID" value="BAC03887.1"/>
    <property type="status" value="ALT_SEQ"/>
    <property type="molecule type" value="mRNA"/>
</dbReference>
<dbReference type="SMR" id="Q17RH7"/>
<dbReference type="FunCoup" id="Q17RH7">
    <property type="interactions" value="864"/>
</dbReference>
<dbReference type="IntAct" id="Q17RH7">
    <property type="interactions" value="1"/>
</dbReference>
<dbReference type="GlyGen" id="Q17RH7">
    <property type="glycosylation" value="1 site, 1 O-linked glycan (1 site)"/>
</dbReference>
<dbReference type="BioMuta" id="HGNC:32178"/>
<dbReference type="DMDM" id="259016158"/>
<dbReference type="MassIVE" id="Q17RH7"/>
<dbReference type="ProteomicsDB" id="61153"/>
<dbReference type="AGR" id="HGNC:32178"/>
<dbReference type="GeneCards" id="TPRXL"/>
<dbReference type="HGNC" id="HGNC:32178">
    <property type="gene designation" value="TPRXL"/>
</dbReference>
<dbReference type="MIM" id="611167">
    <property type="type" value="gene"/>
</dbReference>
<dbReference type="neXtProt" id="NX_Q17RH7"/>
<dbReference type="InParanoid" id="Q17RH7"/>
<dbReference type="PAN-GO" id="Q17RH7">
    <property type="GO annotations" value="0 GO annotations based on evolutionary models"/>
</dbReference>
<dbReference type="Reactome" id="R-HSA-9819196">
    <property type="pathway name" value="Zygotic genome activation (ZGA)"/>
</dbReference>
<dbReference type="ChiTaRS" id="TPRXL">
    <property type="organism name" value="human"/>
</dbReference>
<dbReference type="Pharos" id="Q17RH7">
    <property type="development level" value="Tdark"/>
</dbReference>
<dbReference type="PRO" id="PR:Q17RH7"/>
<dbReference type="Proteomes" id="UP000005640">
    <property type="component" value="Unplaced"/>
</dbReference>
<dbReference type="RNAct" id="Q17RH7">
    <property type="molecule type" value="protein"/>
</dbReference>
<dbReference type="GO" id="GO:0005654">
    <property type="term" value="C:nucleoplasm"/>
    <property type="evidence" value="ECO:0000304"/>
    <property type="project" value="Reactome"/>
</dbReference>
<dbReference type="GO" id="GO:0005634">
    <property type="term" value="C:nucleus"/>
    <property type="evidence" value="ECO:0000314"/>
    <property type="project" value="UniProtKB"/>
</dbReference>
<dbReference type="GO" id="GO:0003677">
    <property type="term" value="F:DNA binding"/>
    <property type="evidence" value="ECO:0007669"/>
    <property type="project" value="UniProtKB-KW"/>
</dbReference>
<dbReference type="GO" id="GO:0000981">
    <property type="term" value="F:DNA-binding transcription factor activity, RNA polymerase II-specific"/>
    <property type="evidence" value="ECO:0000314"/>
    <property type="project" value="UniProtKB"/>
</dbReference>
<dbReference type="GO" id="GO:0160021">
    <property type="term" value="P:maternal-to-zygotic transition of gene expression"/>
    <property type="evidence" value="ECO:0000314"/>
    <property type="project" value="UniProtKB"/>
</dbReference>
<dbReference type="CDD" id="cd00086">
    <property type="entry name" value="homeodomain"/>
    <property type="match status" value="1"/>
</dbReference>
<dbReference type="Gene3D" id="1.10.10.60">
    <property type="entry name" value="Homeodomain-like"/>
    <property type="match status" value="1"/>
</dbReference>
<dbReference type="InterPro" id="IPR001356">
    <property type="entry name" value="HD"/>
</dbReference>
<dbReference type="InterPro" id="IPR009057">
    <property type="entry name" value="Homeodomain-like_sf"/>
</dbReference>
<dbReference type="PANTHER" id="PTHR45793">
    <property type="entry name" value="HOMEOBOX PROTEIN"/>
    <property type="match status" value="1"/>
</dbReference>
<dbReference type="PANTHER" id="PTHR45793:SF12">
    <property type="entry name" value="TETRAPEPTIDE REPEAT HOMEOBOX 1"/>
    <property type="match status" value="1"/>
</dbReference>
<dbReference type="Pfam" id="PF00046">
    <property type="entry name" value="Homeodomain"/>
    <property type="match status" value="1"/>
</dbReference>
<dbReference type="SMART" id="SM00389">
    <property type="entry name" value="HOX"/>
    <property type="match status" value="1"/>
</dbReference>
<dbReference type="SUPFAM" id="SSF46689">
    <property type="entry name" value="Homeodomain-like"/>
    <property type="match status" value="1"/>
</dbReference>
<dbReference type="PROSITE" id="PS50071">
    <property type="entry name" value="HOMEOBOX_2"/>
    <property type="match status" value="1"/>
</dbReference>
<gene>
    <name evidence="5 7" type="primary">TPRXL</name>
</gene>
<comment type="function">
    <text evidence="1 4">Transcription factor required for zygotic genome activation (ZGA), a critical event in early embryonic development during which the developmental control passes from maternally provided mRNAs to the expression of the zygotic genome after fertilization (PubMed:36074823). Protein produced from maternal transcripts that binds and activates expression of key ZGA marker genes, such as NANOGNB, ZSCAN4, DUXB, KLF5 and DPPA3 (PubMed:36074823). Binds to regulatory DNA sequences containing a 5'-TAATCC-3' sequence motif (By similarity).</text>
</comment>
<comment type="subcellular location">
    <subcellularLocation>
        <location evidence="2 4">Nucleus</location>
    </subcellularLocation>
</comment>
<comment type="developmental stage">
    <text evidence="4">Maternally expressed in oocytes (PubMed:36074823). Transcripts start to be translated upon oocyte meiotic resumption and decline after major zygotic genome activation (ZGA) (at protein level) (PubMed:36074823).</text>
</comment>
<comment type="similarity">
    <text evidence="6">Belongs to the paired homeobox family.</text>
</comment>
<comment type="sequence caution" evidence="6">
    <conflict type="erroneous translation">
        <sequence resource="EMBL-CDS" id="BAC03887"/>
    </conflict>
    <text>Wrong choice of frame.</text>
</comment>
<comment type="online information" name="Protein Spotlight">
    <link uri="https://www.proteinspotlight.org/back_issues/256/"/>
    <text>In the beginning - Issue 256 of March 2023</text>
</comment>
<evidence type="ECO:0000250" key="1">
    <source>
        <dbReference type="UniProtKB" id="Q8N7U7"/>
    </source>
</evidence>
<evidence type="ECO:0000255" key="2">
    <source>
        <dbReference type="PROSITE-ProRule" id="PRU00108"/>
    </source>
</evidence>
<evidence type="ECO:0000256" key="3">
    <source>
        <dbReference type="SAM" id="MobiDB-lite"/>
    </source>
</evidence>
<evidence type="ECO:0000269" key="4">
    <source>
    </source>
</evidence>
<evidence type="ECO:0000303" key="5">
    <source>
    </source>
</evidence>
<evidence type="ECO:0000305" key="6"/>
<evidence type="ECO:0000312" key="7">
    <source>
        <dbReference type="HGNC" id="HGNC:32178"/>
    </source>
</evidence>
<reference key="1">
    <citation type="journal article" date="2004" name="Nat. Genet.">
        <title>Complete sequencing and characterization of 21,243 full-length human cDNAs.</title>
        <authorList>
            <person name="Ota T."/>
            <person name="Suzuki Y."/>
            <person name="Nishikawa T."/>
            <person name="Otsuki T."/>
            <person name="Sugiyama T."/>
            <person name="Irie R."/>
            <person name="Wakamatsu A."/>
            <person name="Hayashi K."/>
            <person name="Sato H."/>
            <person name="Nagai K."/>
            <person name="Kimura K."/>
            <person name="Makita H."/>
            <person name="Sekine M."/>
            <person name="Obayashi M."/>
            <person name="Nishi T."/>
            <person name="Shibahara T."/>
            <person name="Tanaka T."/>
            <person name="Ishii S."/>
            <person name="Yamamoto J."/>
            <person name="Saito K."/>
            <person name="Kawai Y."/>
            <person name="Isono Y."/>
            <person name="Nakamura Y."/>
            <person name="Nagahari K."/>
            <person name="Murakami K."/>
            <person name="Yasuda T."/>
            <person name="Iwayanagi T."/>
            <person name="Wagatsuma M."/>
            <person name="Shiratori A."/>
            <person name="Sudo H."/>
            <person name="Hosoiri T."/>
            <person name="Kaku Y."/>
            <person name="Kodaira H."/>
            <person name="Kondo H."/>
            <person name="Sugawara M."/>
            <person name="Takahashi M."/>
            <person name="Kanda K."/>
            <person name="Yokoi T."/>
            <person name="Furuya T."/>
            <person name="Kikkawa E."/>
            <person name="Omura Y."/>
            <person name="Abe K."/>
            <person name="Kamihara K."/>
            <person name="Katsuta N."/>
            <person name="Sato K."/>
            <person name="Tanikawa M."/>
            <person name="Yamazaki M."/>
            <person name="Ninomiya K."/>
            <person name="Ishibashi T."/>
            <person name="Yamashita H."/>
            <person name="Murakawa K."/>
            <person name="Fujimori K."/>
            <person name="Tanai H."/>
            <person name="Kimata M."/>
            <person name="Watanabe M."/>
            <person name="Hiraoka S."/>
            <person name="Chiba Y."/>
            <person name="Ishida S."/>
            <person name="Ono Y."/>
            <person name="Takiguchi S."/>
            <person name="Watanabe S."/>
            <person name="Yosida M."/>
            <person name="Hotuta T."/>
            <person name="Kusano J."/>
            <person name="Kanehori K."/>
            <person name="Takahashi-Fujii A."/>
            <person name="Hara H."/>
            <person name="Tanase T.-O."/>
            <person name="Nomura Y."/>
            <person name="Togiya S."/>
            <person name="Komai F."/>
            <person name="Hara R."/>
            <person name="Takeuchi K."/>
            <person name="Arita M."/>
            <person name="Imose N."/>
            <person name="Musashino K."/>
            <person name="Yuuki H."/>
            <person name="Oshima A."/>
            <person name="Sasaki N."/>
            <person name="Aotsuka S."/>
            <person name="Yoshikawa Y."/>
            <person name="Matsunawa H."/>
            <person name="Ichihara T."/>
            <person name="Shiohata N."/>
            <person name="Sano S."/>
            <person name="Moriya S."/>
            <person name="Momiyama H."/>
            <person name="Satoh N."/>
            <person name="Takami S."/>
            <person name="Terashima Y."/>
            <person name="Suzuki O."/>
            <person name="Nakagawa S."/>
            <person name="Senoh A."/>
            <person name="Mizoguchi H."/>
            <person name="Goto Y."/>
            <person name="Shimizu F."/>
            <person name="Wakebe H."/>
            <person name="Hishigaki H."/>
            <person name="Watanabe T."/>
            <person name="Sugiyama A."/>
            <person name="Takemoto M."/>
            <person name="Kawakami B."/>
            <person name="Yamazaki M."/>
            <person name="Watanabe K."/>
            <person name="Kumagai A."/>
            <person name="Itakura S."/>
            <person name="Fukuzumi Y."/>
            <person name="Fujimori Y."/>
            <person name="Komiyama M."/>
            <person name="Tashiro H."/>
            <person name="Tanigami A."/>
            <person name="Fujiwara T."/>
            <person name="Ono T."/>
            <person name="Yamada K."/>
            <person name="Fujii Y."/>
            <person name="Ozaki K."/>
            <person name="Hirao M."/>
            <person name="Ohmori Y."/>
            <person name="Kawabata A."/>
            <person name="Hikiji T."/>
            <person name="Kobatake N."/>
            <person name="Inagaki H."/>
            <person name="Ikema Y."/>
            <person name="Okamoto S."/>
            <person name="Okitani R."/>
            <person name="Kawakami T."/>
            <person name="Noguchi S."/>
            <person name="Itoh T."/>
            <person name="Shigeta K."/>
            <person name="Senba T."/>
            <person name="Matsumura K."/>
            <person name="Nakajima Y."/>
            <person name="Mizuno T."/>
            <person name="Morinaga M."/>
            <person name="Sasaki M."/>
            <person name="Togashi T."/>
            <person name="Oyama M."/>
            <person name="Hata H."/>
            <person name="Watanabe M."/>
            <person name="Komatsu T."/>
            <person name="Mizushima-Sugano J."/>
            <person name="Satoh T."/>
            <person name="Shirai Y."/>
            <person name="Takahashi Y."/>
            <person name="Nakagawa K."/>
            <person name="Okumura K."/>
            <person name="Nagase T."/>
            <person name="Nomura N."/>
            <person name="Kikuchi H."/>
            <person name="Masuho Y."/>
            <person name="Yamashita R."/>
            <person name="Nakai K."/>
            <person name="Yada T."/>
            <person name="Nakamura Y."/>
            <person name="Ohara O."/>
            <person name="Isogai T."/>
            <person name="Sugano S."/>
        </authorList>
    </citation>
    <scope>NUCLEOTIDE SEQUENCE [LARGE SCALE MRNA]</scope>
    <source>
        <tissue>Placenta</tissue>
    </source>
</reference>
<reference key="2">
    <citation type="journal article" date="2022" name="Science">
        <title>Translatome and transcriptome co-profiling reveals a role of TPRXs in human zygotic genome activation.</title>
        <authorList>
            <person name="Zou Z."/>
            <person name="Zhang C."/>
            <person name="Wang Q."/>
            <person name="Hou Z."/>
            <person name="Xiong Z."/>
            <person name="Kong F."/>
            <person name="Wang Q."/>
            <person name="Song J."/>
            <person name="Liu B."/>
            <person name="Liu B."/>
            <person name="Wang L."/>
            <person name="Lai F."/>
            <person name="Fan Q."/>
            <person name="Tao W."/>
            <person name="Zhao S."/>
            <person name="Ma X."/>
            <person name="Li M."/>
            <person name="Wu K."/>
            <person name="Zhao H."/>
            <person name="Chen Z.J."/>
            <person name="Xie W."/>
        </authorList>
    </citation>
    <scope>FUNCTION</scope>
    <scope>SUBCELLULAR LOCATION</scope>
    <scope>DEVELOPMENTAL STAGE</scope>
</reference>